<dbReference type="EC" id="1.-.-.-" evidence="4"/>
<dbReference type="EMBL" id="AB573288">
    <property type="protein sequence ID" value="BAK09421.1"/>
    <property type="molecule type" value="mRNA"/>
</dbReference>
<dbReference type="SMR" id="F1SY77"/>
<dbReference type="GlyCosmos" id="F1SY77">
    <property type="glycosylation" value="2 sites, No reported glycans"/>
</dbReference>
<dbReference type="GO" id="GO:0016020">
    <property type="term" value="C:membrane"/>
    <property type="evidence" value="ECO:0007669"/>
    <property type="project" value="UniProtKB-SubCell"/>
</dbReference>
<dbReference type="GO" id="GO:0020037">
    <property type="term" value="F:heme binding"/>
    <property type="evidence" value="ECO:0007669"/>
    <property type="project" value="InterPro"/>
</dbReference>
<dbReference type="GO" id="GO:0005506">
    <property type="term" value="F:iron ion binding"/>
    <property type="evidence" value="ECO:0007669"/>
    <property type="project" value="InterPro"/>
</dbReference>
<dbReference type="GO" id="GO:0004497">
    <property type="term" value="F:monooxygenase activity"/>
    <property type="evidence" value="ECO:0007669"/>
    <property type="project" value="UniProtKB-KW"/>
</dbReference>
<dbReference type="GO" id="GO:0016705">
    <property type="term" value="F:oxidoreductase activity, acting on paired donors, with incorporation or reduction of molecular oxygen"/>
    <property type="evidence" value="ECO:0007669"/>
    <property type="project" value="InterPro"/>
</dbReference>
<dbReference type="CDD" id="cd11069">
    <property type="entry name" value="CYP_FUM15-like"/>
    <property type="match status" value="1"/>
</dbReference>
<dbReference type="Gene3D" id="1.10.630.10">
    <property type="entry name" value="Cytochrome P450"/>
    <property type="match status" value="1"/>
</dbReference>
<dbReference type="InterPro" id="IPR001128">
    <property type="entry name" value="Cyt_P450"/>
</dbReference>
<dbReference type="InterPro" id="IPR002401">
    <property type="entry name" value="Cyt_P450_E_grp-I"/>
</dbReference>
<dbReference type="InterPro" id="IPR036396">
    <property type="entry name" value="Cyt_P450_sf"/>
</dbReference>
<dbReference type="InterPro" id="IPR050121">
    <property type="entry name" value="Cytochrome_P450_monoxygenase"/>
</dbReference>
<dbReference type="PANTHER" id="PTHR24305">
    <property type="entry name" value="CYTOCHROME P450"/>
    <property type="match status" value="1"/>
</dbReference>
<dbReference type="PANTHER" id="PTHR24305:SF166">
    <property type="entry name" value="CYTOCHROME P450 12A4, MITOCHONDRIAL-RELATED"/>
    <property type="match status" value="1"/>
</dbReference>
<dbReference type="Pfam" id="PF00067">
    <property type="entry name" value="p450"/>
    <property type="match status" value="1"/>
</dbReference>
<dbReference type="PRINTS" id="PR00463">
    <property type="entry name" value="EP450I"/>
</dbReference>
<dbReference type="PRINTS" id="PR00385">
    <property type="entry name" value="P450"/>
</dbReference>
<dbReference type="SUPFAM" id="SSF48264">
    <property type="entry name" value="Cytochrome P450"/>
    <property type="match status" value="1"/>
</dbReference>
<protein>
    <recommendedName>
        <fullName evidence="5">Cytochrome P450 monooxygenase 81</fullName>
        <ecNumber evidence="4">1.-.-.-</ecNumber>
    </recommendedName>
</protein>
<name>CY081_POSPM</name>
<organism>
    <name type="scientific">Postia placenta (strain ATCC 44394 / Madison 698-R)</name>
    <name type="common">Brown rot fungus</name>
    <name type="synonym">Poria monticola</name>
    <dbReference type="NCBI Taxonomy" id="561896"/>
    <lineage>
        <taxon>Eukaryota</taxon>
        <taxon>Fungi</taxon>
        <taxon>Dikarya</taxon>
        <taxon>Basidiomycota</taxon>
        <taxon>Agaricomycotina</taxon>
        <taxon>Agaricomycetes</taxon>
        <taxon>Polyporales</taxon>
        <taxon>Adustoporiaceae</taxon>
        <taxon>Rhodonia</taxon>
    </lineage>
</organism>
<keyword id="KW-0325">Glycoprotein</keyword>
<keyword id="KW-0349">Heme</keyword>
<keyword id="KW-0408">Iron</keyword>
<keyword id="KW-0472">Membrane</keyword>
<keyword id="KW-0479">Metal-binding</keyword>
<keyword id="KW-0503">Monooxygenase</keyword>
<keyword id="KW-0560">Oxidoreductase</keyword>
<keyword id="KW-0812">Transmembrane</keyword>
<keyword id="KW-1133">Transmembrane helix</keyword>
<comment type="function">
    <text evidence="4">Cytochrome P450 monooxygenase that is able to use dehydroabietic acid as a substrate for oxidation.</text>
</comment>
<comment type="cofactor">
    <cofactor evidence="1">
        <name>heme</name>
        <dbReference type="ChEBI" id="CHEBI:30413"/>
    </cofactor>
</comment>
<comment type="pathway">
    <text evidence="6">Secondary metabolite biosynthesis.</text>
</comment>
<comment type="subcellular location">
    <subcellularLocation>
        <location evidence="2">Membrane</location>
        <topology evidence="2">Multi-pass membrane protein</topology>
    </subcellularLocation>
</comment>
<comment type="similarity">
    <text evidence="6">Belongs to the cytochrome P450 family.</text>
</comment>
<proteinExistence type="evidence at protein level"/>
<evidence type="ECO:0000250" key="1">
    <source>
        <dbReference type="UniProtKB" id="P04798"/>
    </source>
</evidence>
<evidence type="ECO:0000255" key="2"/>
<evidence type="ECO:0000255" key="3">
    <source>
        <dbReference type="PROSITE-ProRule" id="PRU00498"/>
    </source>
</evidence>
<evidence type="ECO:0000269" key="4">
    <source>
    </source>
</evidence>
<evidence type="ECO:0000303" key="5">
    <source>
    </source>
</evidence>
<evidence type="ECO:0000305" key="6"/>
<sequence>MSTDNIPTQLGIAGAVAVLLFLLRRWSSRSTLRNIPGPPPQSQWTGNLKQWFARDGADFQRDVSFNYGPVAKIHGFLGRPILYVADPKALQTILVKEEQVYQETKAFFAMTYLLFGPGLLATAGEKHRKQRKLLNPVFSIKHMRHMLPIFYGVLHKVRDAITMRVSDGPQEIDMLKWMGRTALELIGQGGLGYSFDKLVEDGDNEYGRALKHLQPTLQRINVLRRLIPYVYKLGPAWFRRMVMHYFPLGQVRDAKEIVDTMQRCSSEIFASKKIALARGDEAVMKQVGEGKDIMSILMKANSMASEADRIPEEELVAQMSTFLFAATDTTSNTLARILQQLAIHPDTQQKLREEILAANAEEYMAYDDLDALPLLDGVCRETLRVFPGVTNLARTPTQDTILPLSEPVVGTDGTVMREILVPRGTEILIGIQGSNGRKERWGEDSYEWKPERWLSPLPKTVTENPVPGVYSNLMTFMAGRRACIGFKFSEMEMKVVLAVLLSNFTFELTDKPIQWNISGVRYPTVGKDSNVAQLPLKVGLYKKPTLQ</sequence>
<gene>
    <name evidence="5" type="primary">CYP081</name>
    <name evidence="5" type="synonym">CYP5150D18</name>
</gene>
<feature type="chain" id="PRO_0000451364" description="Cytochrome P450 monooxygenase 81">
    <location>
        <begin position="1"/>
        <end position="547"/>
    </location>
</feature>
<feature type="transmembrane region" description="Helical" evidence="2">
    <location>
        <begin position="6"/>
        <end position="23"/>
    </location>
</feature>
<feature type="transmembrane region" description="Helical" evidence="2">
    <location>
        <begin position="106"/>
        <end position="124"/>
    </location>
</feature>
<feature type="binding site" description="axial binding residue" evidence="1">
    <location>
        <position position="483"/>
    </location>
    <ligand>
        <name>heme</name>
        <dbReference type="ChEBI" id="CHEBI:30413"/>
    </ligand>
    <ligandPart>
        <name>Fe</name>
        <dbReference type="ChEBI" id="CHEBI:18248"/>
    </ligandPart>
</feature>
<feature type="glycosylation site" description="N-linked (GlcNAc...) asparagine" evidence="3">
    <location>
        <position position="503"/>
    </location>
</feature>
<feature type="glycosylation site" description="N-linked (GlcNAc...) asparagine" evidence="3">
    <location>
        <position position="516"/>
    </location>
</feature>
<accession>F1SY77</accession>
<reference key="1">
    <citation type="journal article" date="2012" name="Arch. Microbiol.">
        <title>Molecular identification and functional characterization of cytochrome P450 monooxygenases from the brown-rot basidiomycete Postia placenta.</title>
        <authorList>
            <person name="Ide M."/>
            <person name="Ichinose H."/>
            <person name="Wariishi H."/>
        </authorList>
    </citation>
    <scope>NUCLEOTIDE SEQUENCE [MRNA]</scope>
    <scope>IDENTIFICATION</scope>
    <scope>FUNCTION</scope>
    <scope>CATALYTIC ACTIVITY</scope>
    <source>
        <strain>ATCC 44394 / Madison 698-R</strain>
    </source>
</reference>